<accession>P40118</accession>
<accession>Q0K1E2</accession>
<proteinExistence type="inferred from homology"/>
<evidence type="ECO:0000255" key="1"/>
<evidence type="ECO:0000256" key="2">
    <source>
        <dbReference type="SAM" id="MobiDB-lite"/>
    </source>
</evidence>
<evidence type="ECO:0000305" key="3"/>
<protein>
    <recommendedName>
        <fullName>Protein CbxX, chromosomal</fullName>
    </recommendedName>
</protein>
<name>CBXXC_CUPNH</name>
<organism>
    <name type="scientific">Cupriavidus necator (strain ATCC 17699 / DSM 428 / KCTC 22496 / NCIMB 10442 / H16 / Stanier 337)</name>
    <name type="common">Ralstonia eutropha</name>
    <dbReference type="NCBI Taxonomy" id="381666"/>
    <lineage>
        <taxon>Bacteria</taxon>
        <taxon>Pseudomonadati</taxon>
        <taxon>Pseudomonadota</taxon>
        <taxon>Betaproteobacteria</taxon>
        <taxon>Burkholderiales</taxon>
        <taxon>Burkholderiaceae</taxon>
        <taxon>Cupriavidus</taxon>
    </lineage>
</organism>
<keyword id="KW-0067">ATP-binding</keyword>
<keyword id="KW-0547">Nucleotide-binding</keyword>
<keyword id="KW-1185">Reference proteome</keyword>
<feature type="chain" id="PRO_0000063032" description="Protein CbxX, chromosomal">
    <location>
        <begin position="1"/>
        <end position="317"/>
    </location>
</feature>
<feature type="region of interest" description="Disordered" evidence="2">
    <location>
        <begin position="1"/>
        <end position="21"/>
    </location>
</feature>
<feature type="binding site" evidence="1">
    <location>
        <begin position="85"/>
        <end position="92"/>
    </location>
    <ligand>
        <name>ATP</name>
        <dbReference type="ChEBI" id="CHEBI:30616"/>
    </ligand>
</feature>
<comment type="function">
    <text>Seems to be necessary for the expression of RuBisCO.</text>
</comment>
<comment type="similarity">
    <text evidence="3">Belongs to the CbxX/CfxQ family.</text>
</comment>
<reference key="1">
    <citation type="journal article" date="1992" name="J. Bacteriol.">
        <title>The Calvin cycle enzyme pentose-5-phosphate 3-epimerase is encoded within the cfx operons of the chemoautotroph Alcaligenes eutrophus.</title>
        <authorList>
            <person name="Kusian B."/>
            <person name="Yoo J.-G."/>
            <person name="Bednarski R."/>
            <person name="Bowien B."/>
        </authorList>
    </citation>
    <scope>NUCLEOTIDE SEQUENCE [GENOMIC DNA]</scope>
</reference>
<reference key="2">
    <citation type="journal article" date="2006" name="Nat. Biotechnol.">
        <title>Genome sequence of the bioplastic-producing 'Knallgas' bacterium Ralstonia eutropha H16.</title>
        <authorList>
            <person name="Pohlmann A."/>
            <person name="Fricke W.F."/>
            <person name="Reinecke F."/>
            <person name="Kusian B."/>
            <person name="Liesegang H."/>
            <person name="Cramm R."/>
            <person name="Eitinger T."/>
            <person name="Ewering C."/>
            <person name="Poetter M."/>
            <person name="Schwartz E."/>
            <person name="Strittmatter A."/>
            <person name="Voss I."/>
            <person name="Gottschalk G."/>
            <person name="Steinbuechel A."/>
            <person name="Friedrich B."/>
            <person name="Bowien B."/>
        </authorList>
    </citation>
    <scope>NUCLEOTIDE SEQUENCE [LARGE SCALE GENOMIC DNA]</scope>
    <source>
        <strain>ATCC 17699 / DSM 428 / KCTC 22496 / NCIMB 10442 / H16 / Stanier 337</strain>
    </source>
</reference>
<dbReference type="EMBL" id="M64173">
    <property type="protein sequence ID" value="AAA21960.1"/>
    <property type="molecule type" value="Genomic_DNA"/>
</dbReference>
<dbReference type="EMBL" id="AM260480">
    <property type="protein sequence ID" value="CAJ96182.1"/>
    <property type="molecule type" value="Genomic_DNA"/>
</dbReference>
<dbReference type="PIR" id="A47019">
    <property type="entry name" value="A47019"/>
</dbReference>
<dbReference type="RefSeq" id="WP_011617204.1">
    <property type="nucleotide sequence ID" value="NC_008314.1"/>
</dbReference>
<dbReference type="SMR" id="P40118"/>
<dbReference type="STRING" id="381666.H16_B1393"/>
<dbReference type="KEGG" id="reh:H16_B1393"/>
<dbReference type="eggNOG" id="COG0464">
    <property type="taxonomic scope" value="Bacteria"/>
</dbReference>
<dbReference type="HOGENOM" id="CLU_008749_1_0_4"/>
<dbReference type="OrthoDB" id="9806903at2"/>
<dbReference type="Proteomes" id="UP000008210">
    <property type="component" value="Chromosome 2"/>
</dbReference>
<dbReference type="GO" id="GO:0005524">
    <property type="term" value="F:ATP binding"/>
    <property type="evidence" value="ECO:0007669"/>
    <property type="project" value="UniProtKB-KW"/>
</dbReference>
<dbReference type="GO" id="GO:0016887">
    <property type="term" value="F:ATP hydrolysis activity"/>
    <property type="evidence" value="ECO:0007669"/>
    <property type="project" value="InterPro"/>
</dbReference>
<dbReference type="CDD" id="cd00009">
    <property type="entry name" value="AAA"/>
    <property type="match status" value="1"/>
</dbReference>
<dbReference type="FunFam" id="3.40.50.300:FF:000216">
    <property type="entry name" value="Type VII secretion ATPase EccA"/>
    <property type="match status" value="1"/>
</dbReference>
<dbReference type="Gene3D" id="1.10.8.60">
    <property type="match status" value="1"/>
</dbReference>
<dbReference type="Gene3D" id="3.40.50.300">
    <property type="entry name" value="P-loop containing nucleotide triphosphate hydrolases"/>
    <property type="match status" value="1"/>
</dbReference>
<dbReference type="InterPro" id="IPR003593">
    <property type="entry name" value="AAA+_ATPase"/>
</dbReference>
<dbReference type="InterPro" id="IPR041627">
    <property type="entry name" value="AAA_lid_6"/>
</dbReference>
<dbReference type="InterPro" id="IPR003959">
    <property type="entry name" value="ATPase_AAA_core"/>
</dbReference>
<dbReference type="InterPro" id="IPR000470">
    <property type="entry name" value="CbxX/CfqX_mono"/>
</dbReference>
<dbReference type="InterPro" id="IPR000641">
    <property type="entry name" value="CbxX/CfxQ"/>
</dbReference>
<dbReference type="InterPro" id="IPR050773">
    <property type="entry name" value="CbxX/CfxQ_RuBisCO_ESX"/>
</dbReference>
<dbReference type="InterPro" id="IPR027417">
    <property type="entry name" value="P-loop_NTPase"/>
</dbReference>
<dbReference type="NCBIfam" id="TIGR02880">
    <property type="entry name" value="cbbX_cfxQ"/>
    <property type="match status" value="1"/>
</dbReference>
<dbReference type="PANTHER" id="PTHR43392">
    <property type="entry name" value="AAA-TYPE ATPASE FAMILY PROTEIN / ANKYRIN REPEAT FAMILY PROTEIN"/>
    <property type="match status" value="1"/>
</dbReference>
<dbReference type="PANTHER" id="PTHR43392:SF2">
    <property type="entry name" value="AAA-TYPE ATPASE FAMILY PROTEIN _ ANKYRIN REPEAT FAMILY PROTEIN"/>
    <property type="match status" value="1"/>
</dbReference>
<dbReference type="Pfam" id="PF00004">
    <property type="entry name" value="AAA"/>
    <property type="match status" value="1"/>
</dbReference>
<dbReference type="Pfam" id="PF17866">
    <property type="entry name" value="AAA_lid_6"/>
    <property type="match status" value="1"/>
</dbReference>
<dbReference type="PRINTS" id="PR00819">
    <property type="entry name" value="CBXCFQXSUPER"/>
</dbReference>
<dbReference type="PRINTS" id="PR00820">
    <property type="entry name" value="CBXXCFQX"/>
</dbReference>
<dbReference type="SMART" id="SM00382">
    <property type="entry name" value="AAA"/>
    <property type="match status" value="1"/>
</dbReference>
<dbReference type="SUPFAM" id="SSF52540">
    <property type="entry name" value="P-loop containing nucleoside triphosphate hydrolases"/>
    <property type="match status" value="1"/>
</dbReference>
<sequence length="317" mass="35060">MSAPETTAPLQPPAAPAASLPGSLAESLASSGITELLAQLDRELIGLKPVKARIRDIAALLLVDKLRAARGFSAGAPSLHMCFTGNPGTGKTTVAMRMAQILHQLGYVRRGHLVAVTRDDLVGQYIGHTAPKTKEILKKAMGGVLFIDEAYYLYRPENERDYGQEAIEILLQVMENNRDDLVVILAGYKDRMDRFFESNPGMSSRVAHHVDFPDYQLDELRQIADLMLSEMQYRFDDESRAVFADYLARRMTQPHFANARSVRNALDRARLRHASRLLDDAGTVVDDHTLTTITASDLLASRVFSKAAPDARTPAKE</sequence>
<gene>
    <name type="primary">cbxXC</name>
    <name type="synonym">cbbX2</name>
    <name type="synonym">cfxXC</name>
    <name type="ordered locus">H16_B1393</name>
</gene>